<evidence type="ECO:0000250" key="1">
    <source>
        <dbReference type="UniProtKB" id="Q9Y6G3"/>
    </source>
</evidence>
<evidence type="ECO:0000269" key="2">
    <source>
    </source>
</evidence>
<evidence type="ECO:0000305" key="3"/>
<name>RM42_RAT</name>
<dbReference type="EMBL" id="AABR03088058">
    <property type="status" value="NOT_ANNOTATED_CDS"/>
    <property type="molecule type" value="Genomic_DNA"/>
</dbReference>
<dbReference type="RefSeq" id="XP_008760533.1">
    <property type="nucleotide sequence ID" value="XM_008762311.2"/>
</dbReference>
<dbReference type="RefSeq" id="XP_008767800.1">
    <property type="nucleotide sequence ID" value="XM_008769578.2"/>
</dbReference>
<dbReference type="SMR" id="P0C2B9"/>
<dbReference type="FunCoup" id="P0C2B9">
    <property type="interactions" value="1110"/>
</dbReference>
<dbReference type="STRING" id="10116.ENSRNOP00000061916"/>
<dbReference type="PhosphoSitePlus" id="P0C2B9"/>
<dbReference type="PaxDb" id="10116-ENSRNOP00000061916"/>
<dbReference type="Ensembl" id="ENSRNOT00000011332.7">
    <property type="protein sequence ID" value="ENSRNOP00000089938.1"/>
    <property type="gene ID" value="ENSRNOG00000025964.6"/>
</dbReference>
<dbReference type="UCSC" id="RGD:1304915">
    <property type="organism name" value="rat"/>
</dbReference>
<dbReference type="AGR" id="RGD:9333559"/>
<dbReference type="RGD" id="1304915">
    <property type="gene designation" value="Mrpl42"/>
</dbReference>
<dbReference type="eggNOG" id="KOG4106">
    <property type="taxonomic scope" value="Eukaryota"/>
</dbReference>
<dbReference type="GeneTree" id="ENSGT00390000010491"/>
<dbReference type="InParanoid" id="P0C2B9"/>
<dbReference type="OMA" id="MASGHLC"/>
<dbReference type="PhylomeDB" id="P0C2B9"/>
<dbReference type="TreeFam" id="TF324368"/>
<dbReference type="Reactome" id="R-RNO-5389840">
    <property type="pathway name" value="Mitochondrial translation elongation"/>
</dbReference>
<dbReference type="Reactome" id="R-RNO-5419276">
    <property type="pathway name" value="Mitochondrial translation termination"/>
</dbReference>
<dbReference type="PRO" id="PR:P0C2B9"/>
<dbReference type="Proteomes" id="UP000002494">
    <property type="component" value="Chromosome 13"/>
</dbReference>
<dbReference type="GO" id="GO:0005762">
    <property type="term" value="C:mitochondrial large ribosomal subunit"/>
    <property type="evidence" value="ECO:0000250"/>
    <property type="project" value="UniProtKB"/>
</dbReference>
<dbReference type="GO" id="GO:0005763">
    <property type="term" value="C:mitochondrial small ribosomal subunit"/>
    <property type="evidence" value="ECO:0000266"/>
    <property type="project" value="RGD"/>
</dbReference>
<dbReference type="InterPro" id="IPR019346">
    <property type="entry name" value="Ribosomal_mL42"/>
</dbReference>
<dbReference type="PANTHER" id="PTHR13450:SF4">
    <property type="entry name" value="LARGE RIBOSOMAL SUBUNIT PROTEIN ML42"/>
    <property type="match status" value="1"/>
</dbReference>
<dbReference type="PANTHER" id="PTHR13450">
    <property type="entry name" value="MITOCHONDRIAL 39S RIBOSOMAL PROTEIN L42"/>
    <property type="match status" value="1"/>
</dbReference>
<dbReference type="Pfam" id="PF10210">
    <property type="entry name" value="MRP-S32"/>
    <property type="match status" value="1"/>
</dbReference>
<protein>
    <recommendedName>
        <fullName evidence="3">Large ribosomal subunit protein mL42</fullName>
    </recommendedName>
    <alternativeName>
        <fullName>28S ribosomal protein L42, mitochondrial</fullName>
        <shortName>L42mt</shortName>
        <shortName>MRP-L42</shortName>
    </alternativeName>
    <alternativeName>
        <fullName>28S ribosomal protein S32, mitochondrial</fullName>
        <shortName>MRP-S32</shortName>
        <shortName>S32mt</shortName>
    </alternativeName>
</protein>
<keyword id="KW-0903">Direct protein sequencing</keyword>
<keyword id="KW-0496">Mitochondrion</keyword>
<keyword id="KW-1185">Reference proteome</keyword>
<keyword id="KW-0687">Ribonucleoprotein</keyword>
<keyword id="KW-0689">Ribosomal protein</keyword>
<keyword id="KW-0809">Transit peptide</keyword>
<comment type="subunit">
    <text evidence="1">Component of the mitochondrial ribosome large subunit (39S) which comprises a 16S rRNA and about 50 distinct proteins. Component of the mitochondrial ribosome small subunit (28S) which comprises a 12S rRNA and about 30 distinct proteins.</text>
</comment>
<comment type="subcellular location">
    <subcellularLocation>
        <location evidence="2">Mitochondrion</location>
    </subcellularLocation>
</comment>
<comment type="similarity">
    <text evidence="3">Belongs to the mitochondrion-specific ribosomal protein mL42 family.</text>
</comment>
<comment type="caution">
    <text evidence="3">Has been found in the mitochondrial ribosome large and small subunits.</text>
</comment>
<reference key="1">
    <citation type="journal article" date="2004" name="Nature">
        <title>Genome sequence of the Brown Norway rat yields insights into mammalian evolution.</title>
        <authorList>
            <person name="Gibbs R.A."/>
            <person name="Weinstock G.M."/>
            <person name="Metzker M.L."/>
            <person name="Muzny D.M."/>
            <person name="Sodergren E.J."/>
            <person name="Scherer S."/>
            <person name="Scott G."/>
            <person name="Steffen D."/>
            <person name="Worley K.C."/>
            <person name="Burch P.E."/>
            <person name="Okwuonu G."/>
            <person name="Hines S."/>
            <person name="Lewis L."/>
            <person name="Deramo C."/>
            <person name="Delgado O."/>
            <person name="Dugan-Rocha S."/>
            <person name="Miner G."/>
            <person name="Morgan M."/>
            <person name="Hawes A."/>
            <person name="Gill R."/>
            <person name="Holt R.A."/>
            <person name="Adams M.D."/>
            <person name="Amanatides P.G."/>
            <person name="Baden-Tillson H."/>
            <person name="Barnstead M."/>
            <person name="Chin S."/>
            <person name="Evans C.A."/>
            <person name="Ferriera S."/>
            <person name="Fosler C."/>
            <person name="Glodek A."/>
            <person name="Gu Z."/>
            <person name="Jennings D."/>
            <person name="Kraft C.L."/>
            <person name="Nguyen T."/>
            <person name="Pfannkoch C.M."/>
            <person name="Sitter C."/>
            <person name="Sutton G.G."/>
            <person name="Venter J.C."/>
            <person name="Woodage T."/>
            <person name="Smith D."/>
            <person name="Lee H.-M."/>
            <person name="Gustafson E."/>
            <person name="Cahill P."/>
            <person name="Kana A."/>
            <person name="Doucette-Stamm L."/>
            <person name="Weinstock K."/>
            <person name="Fechtel K."/>
            <person name="Weiss R.B."/>
            <person name="Dunn D.M."/>
            <person name="Green E.D."/>
            <person name="Blakesley R.W."/>
            <person name="Bouffard G.G."/>
            <person name="De Jong P.J."/>
            <person name="Osoegawa K."/>
            <person name="Zhu B."/>
            <person name="Marra M."/>
            <person name="Schein J."/>
            <person name="Bosdet I."/>
            <person name="Fjell C."/>
            <person name="Jones S."/>
            <person name="Krzywinski M."/>
            <person name="Mathewson C."/>
            <person name="Siddiqui A."/>
            <person name="Wye N."/>
            <person name="McPherson J."/>
            <person name="Zhao S."/>
            <person name="Fraser C.M."/>
            <person name="Shetty J."/>
            <person name="Shatsman S."/>
            <person name="Geer K."/>
            <person name="Chen Y."/>
            <person name="Abramzon S."/>
            <person name="Nierman W.C."/>
            <person name="Havlak P.H."/>
            <person name="Chen R."/>
            <person name="Durbin K.J."/>
            <person name="Egan A."/>
            <person name="Ren Y."/>
            <person name="Song X.-Z."/>
            <person name="Li B."/>
            <person name="Liu Y."/>
            <person name="Qin X."/>
            <person name="Cawley S."/>
            <person name="Cooney A.J."/>
            <person name="D'Souza L.M."/>
            <person name="Martin K."/>
            <person name="Wu J.Q."/>
            <person name="Gonzalez-Garay M.L."/>
            <person name="Jackson A.R."/>
            <person name="Kalafus K.J."/>
            <person name="McLeod M.P."/>
            <person name="Milosavljevic A."/>
            <person name="Virk D."/>
            <person name="Volkov A."/>
            <person name="Wheeler D.A."/>
            <person name="Zhang Z."/>
            <person name="Bailey J.A."/>
            <person name="Eichler E.E."/>
            <person name="Tuzun E."/>
            <person name="Birney E."/>
            <person name="Mongin E."/>
            <person name="Ureta-Vidal A."/>
            <person name="Woodwark C."/>
            <person name="Zdobnov E."/>
            <person name="Bork P."/>
            <person name="Suyama M."/>
            <person name="Torrents D."/>
            <person name="Alexandersson M."/>
            <person name="Trask B.J."/>
            <person name="Young J.M."/>
            <person name="Huang H."/>
            <person name="Wang H."/>
            <person name="Xing H."/>
            <person name="Daniels S."/>
            <person name="Gietzen D."/>
            <person name="Schmidt J."/>
            <person name="Stevens K."/>
            <person name="Vitt U."/>
            <person name="Wingrove J."/>
            <person name="Camara F."/>
            <person name="Mar Alba M."/>
            <person name="Abril J.F."/>
            <person name="Guigo R."/>
            <person name="Smit A."/>
            <person name="Dubchak I."/>
            <person name="Rubin E.M."/>
            <person name="Couronne O."/>
            <person name="Poliakov A."/>
            <person name="Huebner N."/>
            <person name="Ganten D."/>
            <person name="Goesele C."/>
            <person name="Hummel O."/>
            <person name="Kreitler T."/>
            <person name="Lee Y.-A."/>
            <person name="Monti J."/>
            <person name="Schulz H."/>
            <person name="Zimdahl H."/>
            <person name="Himmelbauer H."/>
            <person name="Lehrach H."/>
            <person name="Jacob H.J."/>
            <person name="Bromberg S."/>
            <person name="Gullings-Handley J."/>
            <person name="Jensen-Seaman M.I."/>
            <person name="Kwitek A.E."/>
            <person name="Lazar J."/>
            <person name="Pasko D."/>
            <person name="Tonellato P.J."/>
            <person name="Twigger S."/>
            <person name="Ponting C.P."/>
            <person name="Duarte J.M."/>
            <person name="Rice S."/>
            <person name="Goodstadt L."/>
            <person name="Beatson S.A."/>
            <person name="Emes R.D."/>
            <person name="Winter E.E."/>
            <person name="Webber C."/>
            <person name="Brandt P."/>
            <person name="Nyakatura G."/>
            <person name="Adetobi M."/>
            <person name="Chiaromonte F."/>
            <person name="Elnitski L."/>
            <person name="Eswara P."/>
            <person name="Hardison R.C."/>
            <person name="Hou M."/>
            <person name="Kolbe D."/>
            <person name="Makova K."/>
            <person name="Miller W."/>
            <person name="Nekrutenko A."/>
            <person name="Riemer C."/>
            <person name="Schwartz S."/>
            <person name="Taylor J."/>
            <person name="Yang S."/>
            <person name="Zhang Y."/>
            <person name="Lindpaintner K."/>
            <person name="Andrews T.D."/>
            <person name="Caccamo M."/>
            <person name="Clamp M."/>
            <person name="Clarke L."/>
            <person name="Curwen V."/>
            <person name="Durbin R.M."/>
            <person name="Eyras E."/>
            <person name="Searle S.M."/>
            <person name="Cooper G.M."/>
            <person name="Batzoglou S."/>
            <person name="Brudno M."/>
            <person name="Sidow A."/>
            <person name="Stone E.A."/>
            <person name="Payseur B.A."/>
            <person name="Bourque G."/>
            <person name="Lopez-Otin C."/>
            <person name="Puente X.S."/>
            <person name="Chakrabarti K."/>
            <person name="Chatterji S."/>
            <person name="Dewey C."/>
            <person name="Pachter L."/>
            <person name="Bray N."/>
            <person name="Yap V.B."/>
            <person name="Caspi A."/>
            <person name="Tesler G."/>
            <person name="Pevzner P.A."/>
            <person name="Haussler D."/>
            <person name="Roskin K.M."/>
            <person name="Baertsch R."/>
            <person name="Clawson H."/>
            <person name="Furey T.S."/>
            <person name="Hinrichs A.S."/>
            <person name="Karolchik D."/>
            <person name="Kent W.J."/>
            <person name="Rosenbloom K.R."/>
            <person name="Trumbower H."/>
            <person name="Weirauch M."/>
            <person name="Cooper D.N."/>
            <person name="Stenson P.D."/>
            <person name="Ma B."/>
            <person name="Brent M."/>
            <person name="Arumugam M."/>
            <person name="Shteynberg D."/>
            <person name="Copley R.R."/>
            <person name="Taylor M.S."/>
            <person name="Riethman H."/>
            <person name="Mudunuri U."/>
            <person name="Peterson J."/>
            <person name="Guyer M."/>
            <person name="Felsenfeld A."/>
            <person name="Old S."/>
            <person name="Mockrin S."/>
            <person name="Collins F.S."/>
        </authorList>
    </citation>
    <scope>NUCLEOTIDE SEQUENCE [LARGE SCALE GENOMIC DNA]</scope>
    <source>
        <strain>Brown Norway</strain>
    </source>
</reference>
<reference key="2">
    <citation type="journal article" date="1998" name="J. Biol. Chem.">
        <title>Mammalian mitochondrial ribosomal proteins. N-terminal amino acid sequencing, characterization, and identification of corresponding gene sequences.</title>
        <authorList>
            <person name="Goldschmidt-Reisin S."/>
            <person name="Kitakawa M."/>
            <person name="Herfurth E."/>
            <person name="Wittmann-Liebold B."/>
            <person name="Grohmann L."/>
            <person name="Graack H.-R."/>
        </authorList>
    </citation>
    <scope>PROTEIN SEQUENCE OF 32-54</scope>
    <scope>SUBCELLULAR LOCATION</scope>
</reference>
<gene>
    <name type="primary">Mrpl42</name>
    <name type="synonym">Mrps32</name>
</gene>
<organism>
    <name type="scientific">Rattus norvegicus</name>
    <name type="common">Rat</name>
    <dbReference type="NCBI Taxonomy" id="10116"/>
    <lineage>
        <taxon>Eukaryota</taxon>
        <taxon>Metazoa</taxon>
        <taxon>Chordata</taxon>
        <taxon>Craniata</taxon>
        <taxon>Vertebrata</taxon>
        <taxon>Euteleostomi</taxon>
        <taxon>Mammalia</taxon>
        <taxon>Eutheria</taxon>
        <taxon>Euarchontoglires</taxon>
        <taxon>Glires</taxon>
        <taxon>Rodentia</taxon>
        <taxon>Myomorpha</taxon>
        <taxon>Muroidea</taxon>
        <taxon>Muridae</taxon>
        <taxon>Murinae</taxon>
        <taxon>Rattus</taxon>
    </lineage>
</organism>
<feature type="transit peptide" description="Mitochondrion" evidence="2">
    <location>
        <begin position="1"/>
        <end position="31"/>
    </location>
</feature>
<feature type="chain" id="PRO_0000273238" description="Large ribosomal subunit protein mL42">
    <location>
        <begin position="32"/>
        <end position="141"/>
    </location>
</feature>
<sequence length="141" mass="16469">MTAAVKWAVSHRTIWRHLFPIQNGAISSACHKSTYSSLPDDYNCKVELALTSDGRTIVCYHPSVDVPYEHTKPIPHPDLLHNNEETHEQILRTKLEGNHKHLEQGPMIEQLSKVFFTTKHRWYPHGQYHRCRKKLNPPKDR</sequence>
<proteinExistence type="evidence at protein level"/>
<accession>P0C2B9</accession>